<sequence length="530" mass="61798">MPGPPGSLEMGPLTFRDVAIEFSLEEWQCLDTAQRNLYRKVMFENYRNLVFLGIAVSKPHLITCLEQGKEPWNRKRQEMVAKPPVIYSHFTEDLWPEHSIKDSFQKVILRGYGKCGHENLQLRISCKSVDESKVFKEGYNELNQCLRTTQSKIFQCDKYVKVFHKFSNSNSHKKRNTGKKVFKCKECGKSFCMLSHLTQHIRIHTRENSYKCEECGKVLNWFSELIKHKGIHMGEKPYKCEECGKAFNQSSTLIKHKKIHIEEKPFKCEECGKAFSLFSILSKHKIIHTGDKPYKCDECHKAFNWFATLTNHKRIHTGEKPFKCEECGKDFNQFSNLTKHKKIHTGEKPYKCEECGKAFNQFANLTRHKKIHTGEKSYKCEECGKAFIQSSNLTEHMRIHTGEKPYKCEECGKAFNGCSSLTRHKRIHTRENTYKCEECGKGFTLFSTLTNHKVIHTGEKSYKCDECGNVFNWPATLANHKRIHAREKPYKCEECGKAFNRSSHLTRHKKIHTGEKLYKPEKCDNNFDNT</sequence>
<organism>
    <name type="scientific">Homo sapiens</name>
    <name type="common">Human</name>
    <dbReference type="NCBI Taxonomy" id="9606"/>
    <lineage>
        <taxon>Eukaryota</taxon>
        <taxon>Metazoa</taxon>
        <taxon>Chordata</taxon>
        <taxon>Craniata</taxon>
        <taxon>Vertebrata</taxon>
        <taxon>Euteleostomi</taxon>
        <taxon>Mammalia</taxon>
        <taxon>Eutheria</taxon>
        <taxon>Euarchontoglires</taxon>
        <taxon>Primates</taxon>
        <taxon>Haplorrhini</taxon>
        <taxon>Catarrhini</taxon>
        <taxon>Hominidae</taxon>
        <taxon>Homo</taxon>
    </lineage>
</organism>
<protein>
    <recommendedName>
        <fullName>Zinc finger protein 680</fullName>
    </recommendedName>
</protein>
<proteinExistence type="evidence at protein level"/>
<comment type="function">
    <text>May be involved in transcriptional regulation.</text>
</comment>
<comment type="subcellular location">
    <subcellularLocation>
        <location evidence="5">Nucleus</location>
    </subcellularLocation>
</comment>
<comment type="alternative products">
    <event type="alternative splicing"/>
    <isoform>
        <id>Q8NEM1-1</id>
        <name>1</name>
        <sequence type="displayed"/>
    </isoform>
    <isoform>
        <id>Q8NEM1-2</id>
        <name>2</name>
        <sequence type="described" ref="VSP_043114 VSP_043115"/>
    </isoform>
</comment>
<comment type="similarity">
    <text evidence="5">Belongs to the krueppel C2H2-type zinc-finger protein family.</text>
</comment>
<comment type="sequence caution" evidence="5">
    <conflict type="erroneous initiation">
        <sequence resource="EMBL-CDS" id="BAC11286"/>
    </conflict>
</comment>
<keyword id="KW-0025">Alternative splicing</keyword>
<keyword id="KW-0238">DNA-binding</keyword>
<keyword id="KW-1017">Isopeptide bond</keyword>
<keyword id="KW-0479">Metal-binding</keyword>
<keyword id="KW-0539">Nucleus</keyword>
<keyword id="KW-1267">Proteomics identification</keyword>
<keyword id="KW-1185">Reference proteome</keyword>
<keyword id="KW-0677">Repeat</keyword>
<keyword id="KW-0804">Transcription</keyword>
<keyword id="KW-0805">Transcription regulation</keyword>
<keyword id="KW-0832">Ubl conjugation</keyword>
<keyword id="KW-0862">Zinc</keyword>
<keyword id="KW-0863">Zinc-finger</keyword>
<evidence type="ECO:0000255" key="1">
    <source>
        <dbReference type="PROSITE-ProRule" id="PRU00042"/>
    </source>
</evidence>
<evidence type="ECO:0000255" key="2">
    <source>
        <dbReference type="PROSITE-ProRule" id="PRU00119"/>
    </source>
</evidence>
<evidence type="ECO:0000269" key="3">
    <source>
    </source>
</evidence>
<evidence type="ECO:0000303" key="4">
    <source>
    </source>
</evidence>
<evidence type="ECO:0000305" key="5"/>
<evidence type="ECO:0007744" key="6">
    <source>
    </source>
</evidence>
<dbReference type="EMBL" id="AK074911">
    <property type="protein sequence ID" value="BAC11286.1"/>
    <property type="status" value="ALT_INIT"/>
    <property type="molecule type" value="mRNA"/>
</dbReference>
<dbReference type="EMBL" id="AK122937">
    <property type="protein sequence ID" value="BAG53806.1"/>
    <property type="molecule type" value="mRNA"/>
</dbReference>
<dbReference type="EMBL" id="AK131240">
    <property type="protein sequence ID" value="BAD18422.1"/>
    <property type="molecule type" value="mRNA"/>
</dbReference>
<dbReference type="EMBL" id="AC016769">
    <property type="status" value="NOT_ANNOTATED_CDS"/>
    <property type="molecule type" value="Genomic_DNA"/>
</dbReference>
<dbReference type="EMBL" id="CH471204">
    <property type="protein sequence ID" value="EAW77970.1"/>
    <property type="molecule type" value="Genomic_DNA"/>
</dbReference>
<dbReference type="EMBL" id="CH471204">
    <property type="protein sequence ID" value="EAW77971.1"/>
    <property type="molecule type" value="Genomic_DNA"/>
</dbReference>
<dbReference type="EMBL" id="BC030700">
    <property type="protein sequence ID" value="AAH30700.1"/>
    <property type="molecule type" value="mRNA"/>
</dbReference>
<dbReference type="CCDS" id="CCDS34644.1">
    <molecule id="Q8NEM1-1"/>
</dbReference>
<dbReference type="CCDS" id="CCDS47594.1">
    <molecule id="Q8NEM1-2"/>
</dbReference>
<dbReference type="RefSeq" id="NP_001123494.1">
    <molecule id="Q8NEM1-2"/>
    <property type="nucleotide sequence ID" value="NM_001130022.2"/>
</dbReference>
<dbReference type="RefSeq" id="NP_848653.2">
    <molecule id="Q8NEM1-1"/>
    <property type="nucleotide sequence ID" value="NM_178558.5"/>
</dbReference>
<dbReference type="RefSeq" id="XP_016867615.1">
    <property type="nucleotide sequence ID" value="XM_017012126.1"/>
</dbReference>
<dbReference type="RefSeq" id="XP_016867616.1">
    <property type="nucleotide sequence ID" value="XM_017012127.1"/>
</dbReference>
<dbReference type="RefSeq" id="XP_016867617.1">
    <property type="nucleotide sequence ID" value="XM_017012128.1"/>
</dbReference>
<dbReference type="SMR" id="Q8NEM1"/>
<dbReference type="BioGRID" id="131023">
    <property type="interactions" value="4"/>
</dbReference>
<dbReference type="FunCoup" id="Q8NEM1">
    <property type="interactions" value="112"/>
</dbReference>
<dbReference type="IntAct" id="Q8NEM1">
    <property type="interactions" value="1"/>
</dbReference>
<dbReference type="STRING" id="9606.ENSP00000309330"/>
<dbReference type="iPTMnet" id="Q8NEM1"/>
<dbReference type="PhosphoSitePlus" id="Q8NEM1"/>
<dbReference type="BioMuta" id="ZNF680"/>
<dbReference type="DMDM" id="116242865"/>
<dbReference type="jPOST" id="Q8NEM1"/>
<dbReference type="MassIVE" id="Q8NEM1"/>
<dbReference type="PaxDb" id="9606-ENSP00000309330"/>
<dbReference type="PeptideAtlas" id="Q8NEM1"/>
<dbReference type="ProteomicsDB" id="73179">
    <molecule id="Q8NEM1-1"/>
</dbReference>
<dbReference type="Antibodypedia" id="28107">
    <property type="antibodies" value="89 antibodies from 18 providers"/>
</dbReference>
<dbReference type="DNASU" id="340252"/>
<dbReference type="Ensembl" id="ENST00000309683.11">
    <molecule id="Q8NEM1-1"/>
    <property type="protein sequence ID" value="ENSP00000309330.6"/>
    <property type="gene ID" value="ENSG00000173041.12"/>
</dbReference>
<dbReference type="Ensembl" id="ENST00000447137.2">
    <molecule id="Q8NEM1-2"/>
    <property type="protein sequence ID" value="ENSP00000393506.2"/>
    <property type="gene ID" value="ENSG00000173041.12"/>
</dbReference>
<dbReference type="GeneID" id="340252"/>
<dbReference type="KEGG" id="hsa:340252"/>
<dbReference type="MANE-Select" id="ENST00000309683.11">
    <property type="protein sequence ID" value="ENSP00000309330.6"/>
    <property type="RefSeq nucleotide sequence ID" value="NM_178558.5"/>
    <property type="RefSeq protein sequence ID" value="NP_848653.2"/>
</dbReference>
<dbReference type="UCSC" id="uc003tta.3">
    <molecule id="Q8NEM1-1"/>
    <property type="organism name" value="human"/>
</dbReference>
<dbReference type="AGR" id="HGNC:26897"/>
<dbReference type="CTD" id="340252"/>
<dbReference type="DisGeNET" id="340252"/>
<dbReference type="GeneCards" id="ZNF680"/>
<dbReference type="HGNC" id="HGNC:26897">
    <property type="gene designation" value="ZNF680"/>
</dbReference>
<dbReference type="HPA" id="ENSG00000173041">
    <property type="expression patterns" value="Low tissue specificity"/>
</dbReference>
<dbReference type="neXtProt" id="NX_Q8NEM1"/>
<dbReference type="OpenTargets" id="ENSG00000173041"/>
<dbReference type="PharmGKB" id="PA142670481"/>
<dbReference type="VEuPathDB" id="HostDB:ENSG00000173041"/>
<dbReference type="eggNOG" id="KOG1721">
    <property type="taxonomic scope" value="Eukaryota"/>
</dbReference>
<dbReference type="GeneTree" id="ENSGT01130000278311"/>
<dbReference type="HOGENOM" id="CLU_002678_44_0_1"/>
<dbReference type="InParanoid" id="Q8NEM1"/>
<dbReference type="OMA" id="AFTWCSH"/>
<dbReference type="OrthoDB" id="9547406at2759"/>
<dbReference type="PAN-GO" id="Q8NEM1">
    <property type="GO annotations" value="3 GO annotations based on evolutionary models"/>
</dbReference>
<dbReference type="PhylomeDB" id="Q8NEM1"/>
<dbReference type="TreeFam" id="TF342117"/>
<dbReference type="PathwayCommons" id="Q8NEM1"/>
<dbReference type="Reactome" id="R-HSA-212436">
    <property type="pathway name" value="Generic Transcription Pathway"/>
</dbReference>
<dbReference type="Reactome" id="R-HSA-9843940">
    <property type="pathway name" value="Regulation of endogenous retroelements by KRAB-ZFP proteins"/>
</dbReference>
<dbReference type="SignaLink" id="Q8NEM1"/>
<dbReference type="BioGRID-ORCS" id="340252">
    <property type="hits" value="20 hits in 1150 CRISPR screens"/>
</dbReference>
<dbReference type="ChiTaRS" id="ZNF680">
    <property type="organism name" value="human"/>
</dbReference>
<dbReference type="GenomeRNAi" id="340252"/>
<dbReference type="Pharos" id="Q8NEM1">
    <property type="development level" value="Tdark"/>
</dbReference>
<dbReference type="PRO" id="PR:Q8NEM1"/>
<dbReference type="Proteomes" id="UP000005640">
    <property type="component" value="Chromosome 7"/>
</dbReference>
<dbReference type="RNAct" id="Q8NEM1">
    <property type="molecule type" value="protein"/>
</dbReference>
<dbReference type="Bgee" id="ENSG00000173041">
    <property type="expression patterns" value="Expressed in calcaneal tendon and 180 other cell types or tissues"/>
</dbReference>
<dbReference type="GO" id="GO:0005634">
    <property type="term" value="C:nucleus"/>
    <property type="evidence" value="ECO:0007669"/>
    <property type="project" value="UniProtKB-SubCell"/>
</dbReference>
<dbReference type="GO" id="GO:0000981">
    <property type="term" value="F:DNA-binding transcription factor activity, RNA polymerase II-specific"/>
    <property type="evidence" value="ECO:0000318"/>
    <property type="project" value="GO_Central"/>
</dbReference>
<dbReference type="GO" id="GO:0000978">
    <property type="term" value="F:RNA polymerase II cis-regulatory region sequence-specific DNA binding"/>
    <property type="evidence" value="ECO:0000318"/>
    <property type="project" value="GO_Central"/>
</dbReference>
<dbReference type="GO" id="GO:0008270">
    <property type="term" value="F:zinc ion binding"/>
    <property type="evidence" value="ECO:0007669"/>
    <property type="project" value="UniProtKB-KW"/>
</dbReference>
<dbReference type="GO" id="GO:0006355">
    <property type="term" value="P:regulation of DNA-templated transcription"/>
    <property type="evidence" value="ECO:0000318"/>
    <property type="project" value="GO_Central"/>
</dbReference>
<dbReference type="CDD" id="cd07765">
    <property type="entry name" value="KRAB_A-box"/>
    <property type="match status" value="1"/>
</dbReference>
<dbReference type="FunFam" id="3.30.160.60:FF:001956">
    <property type="entry name" value="ZFP37 zinc finger protein"/>
    <property type="match status" value="1"/>
</dbReference>
<dbReference type="FunFam" id="3.30.160.60:FF:001737">
    <property type="entry name" value="Zinc finger protein 100"/>
    <property type="match status" value="5"/>
</dbReference>
<dbReference type="FunFam" id="3.30.160.60:FF:000034">
    <property type="entry name" value="zinc finger protein 25"/>
    <property type="match status" value="1"/>
</dbReference>
<dbReference type="FunFam" id="3.30.160.60:FF:001868">
    <property type="entry name" value="Zinc finger protein 264"/>
    <property type="match status" value="2"/>
</dbReference>
<dbReference type="FunFam" id="3.30.160.60:FF:000362">
    <property type="entry name" value="Zinc finger protein 606"/>
    <property type="match status" value="1"/>
</dbReference>
<dbReference type="FunFam" id="3.30.160.60:FF:003495">
    <property type="entry name" value="Zinc finger protein 680"/>
    <property type="match status" value="1"/>
</dbReference>
<dbReference type="FunFam" id="3.30.160.60:FF:000307">
    <property type="entry name" value="Zinc finger protein ZFP69 isoform 1"/>
    <property type="match status" value="1"/>
</dbReference>
<dbReference type="Gene3D" id="6.10.140.140">
    <property type="match status" value="1"/>
</dbReference>
<dbReference type="Gene3D" id="3.30.160.60">
    <property type="entry name" value="Classic Zinc Finger"/>
    <property type="match status" value="12"/>
</dbReference>
<dbReference type="InterPro" id="IPR001909">
    <property type="entry name" value="KRAB"/>
</dbReference>
<dbReference type="InterPro" id="IPR036051">
    <property type="entry name" value="KRAB_dom_sf"/>
</dbReference>
<dbReference type="InterPro" id="IPR036236">
    <property type="entry name" value="Znf_C2H2_sf"/>
</dbReference>
<dbReference type="InterPro" id="IPR013087">
    <property type="entry name" value="Znf_C2H2_type"/>
</dbReference>
<dbReference type="PANTHER" id="PTHR24381">
    <property type="entry name" value="ZINC FINGER PROTEIN"/>
    <property type="match status" value="1"/>
</dbReference>
<dbReference type="PANTHER" id="PTHR24381:SF355">
    <property type="entry name" value="ZINC FINGER PROTEIN 273"/>
    <property type="match status" value="1"/>
</dbReference>
<dbReference type="Pfam" id="PF01352">
    <property type="entry name" value="KRAB"/>
    <property type="match status" value="1"/>
</dbReference>
<dbReference type="Pfam" id="PF00096">
    <property type="entry name" value="zf-C2H2"/>
    <property type="match status" value="6"/>
</dbReference>
<dbReference type="Pfam" id="PF13912">
    <property type="entry name" value="zf-C2H2_6"/>
    <property type="match status" value="2"/>
</dbReference>
<dbReference type="Pfam" id="PF13465">
    <property type="entry name" value="zf-H2C2_2"/>
    <property type="match status" value="1"/>
</dbReference>
<dbReference type="SMART" id="SM00349">
    <property type="entry name" value="KRAB"/>
    <property type="match status" value="1"/>
</dbReference>
<dbReference type="SMART" id="SM00355">
    <property type="entry name" value="ZnF_C2H2"/>
    <property type="match status" value="12"/>
</dbReference>
<dbReference type="SUPFAM" id="SSF57667">
    <property type="entry name" value="beta-beta-alpha zinc fingers"/>
    <property type="match status" value="7"/>
</dbReference>
<dbReference type="SUPFAM" id="SSF109640">
    <property type="entry name" value="KRAB domain (Kruppel-associated box)"/>
    <property type="match status" value="1"/>
</dbReference>
<dbReference type="PROSITE" id="PS50805">
    <property type="entry name" value="KRAB"/>
    <property type="match status" value="1"/>
</dbReference>
<dbReference type="PROSITE" id="PS00028">
    <property type="entry name" value="ZINC_FINGER_C2H2_1"/>
    <property type="match status" value="12"/>
</dbReference>
<dbReference type="PROSITE" id="PS50157">
    <property type="entry name" value="ZINC_FINGER_C2H2_2"/>
    <property type="match status" value="12"/>
</dbReference>
<reference key="1">
    <citation type="journal article" date="2004" name="Nat. Genet.">
        <title>Complete sequencing and characterization of 21,243 full-length human cDNAs.</title>
        <authorList>
            <person name="Ota T."/>
            <person name="Suzuki Y."/>
            <person name="Nishikawa T."/>
            <person name="Otsuki T."/>
            <person name="Sugiyama T."/>
            <person name="Irie R."/>
            <person name="Wakamatsu A."/>
            <person name="Hayashi K."/>
            <person name="Sato H."/>
            <person name="Nagai K."/>
            <person name="Kimura K."/>
            <person name="Makita H."/>
            <person name="Sekine M."/>
            <person name="Obayashi M."/>
            <person name="Nishi T."/>
            <person name="Shibahara T."/>
            <person name="Tanaka T."/>
            <person name="Ishii S."/>
            <person name="Yamamoto J."/>
            <person name="Saito K."/>
            <person name="Kawai Y."/>
            <person name="Isono Y."/>
            <person name="Nakamura Y."/>
            <person name="Nagahari K."/>
            <person name="Murakami K."/>
            <person name="Yasuda T."/>
            <person name="Iwayanagi T."/>
            <person name="Wagatsuma M."/>
            <person name="Shiratori A."/>
            <person name="Sudo H."/>
            <person name="Hosoiri T."/>
            <person name="Kaku Y."/>
            <person name="Kodaira H."/>
            <person name="Kondo H."/>
            <person name="Sugawara M."/>
            <person name="Takahashi M."/>
            <person name="Kanda K."/>
            <person name="Yokoi T."/>
            <person name="Furuya T."/>
            <person name="Kikkawa E."/>
            <person name="Omura Y."/>
            <person name="Abe K."/>
            <person name="Kamihara K."/>
            <person name="Katsuta N."/>
            <person name="Sato K."/>
            <person name="Tanikawa M."/>
            <person name="Yamazaki M."/>
            <person name="Ninomiya K."/>
            <person name="Ishibashi T."/>
            <person name="Yamashita H."/>
            <person name="Murakawa K."/>
            <person name="Fujimori K."/>
            <person name="Tanai H."/>
            <person name="Kimata M."/>
            <person name="Watanabe M."/>
            <person name="Hiraoka S."/>
            <person name="Chiba Y."/>
            <person name="Ishida S."/>
            <person name="Ono Y."/>
            <person name="Takiguchi S."/>
            <person name="Watanabe S."/>
            <person name="Yosida M."/>
            <person name="Hotuta T."/>
            <person name="Kusano J."/>
            <person name="Kanehori K."/>
            <person name="Takahashi-Fujii A."/>
            <person name="Hara H."/>
            <person name="Tanase T.-O."/>
            <person name="Nomura Y."/>
            <person name="Togiya S."/>
            <person name="Komai F."/>
            <person name="Hara R."/>
            <person name="Takeuchi K."/>
            <person name="Arita M."/>
            <person name="Imose N."/>
            <person name="Musashino K."/>
            <person name="Yuuki H."/>
            <person name="Oshima A."/>
            <person name="Sasaki N."/>
            <person name="Aotsuka S."/>
            <person name="Yoshikawa Y."/>
            <person name="Matsunawa H."/>
            <person name="Ichihara T."/>
            <person name="Shiohata N."/>
            <person name="Sano S."/>
            <person name="Moriya S."/>
            <person name="Momiyama H."/>
            <person name="Satoh N."/>
            <person name="Takami S."/>
            <person name="Terashima Y."/>
            <person name="Suzuki O."/>
            <person name="Nakagawa S."/>
            <person name="Senoh A."/>
            <person name="Mizoguchi H."/>
            <person name="Goto Y."/>
            <person name="Shimizu F."/>
            <person name="Wakebe H."/>
            <person name="Hishigaki H."/>
            <person name="Watanabe T."/>
            <person name="Sugiyama A."/>
            <person name="Takemoto M."/>
            <person name="Kawakami B."/>
            <person name="Yamazaki M."/>
            <person name="Watanabe K."/>
            <person name="Kumagai A."/>
            <person name="Itakura S."/>
            <person name="Fukuzumi Y."/>
            <person name="Fujimori Y."/>
            <person name="Komiyama M."/>
            <person name="Tashiro H."/>
            <person name="Tanigami A."/>
            <person name="Fujiwara T."/>
            <person name="Ono T."/>
            <person name="Yamada K."/>
            <person name="Fujii Y."/>
            <person name="Ozaki K."/>
            <person name="Hirao M."/>
            <person name="Ohmori Y."/>
            <person name="Kawabata A."/>
            <person name="Hikiji T."/>
            <person name="Kobatake N."/>
            <person name="Inagaki H."/>
            <person name="Ikema Y."/>
            <person name="Okamoto S."/>
            <person name="Okitani R."/>
            <person name="Kawakami T."/>
            <person name="Noguchi S."/>
            <person name="Itoh T."/>
            <person name="Shigeta K."/>
            <person name="Senba T."/>
            <person name="Matsumura K."/>
            <person name="Nakajima Y."/>
            <person name="Mizuno T."/>
            <person name="Morinaga M."/>
            <person name="Sasaki M."/>
            <person name="Togashi T."/>
            <person name="Oyama M."/>
            <person name="Hata H."/>
            <person name="Watanabe M."/>
            <person name="Komatsu T."/>
            <person name="Mizushima-Sugano J."/>
            <person name="Satoh T."/>
            <person name="Shirai Y."/>
            <person name="Takahashi Y."/>
            <person name="Nakagawa K."/>
            <person name="Okumura K."/>
            <person name="Nagase T."/>
            <person name="Nomura N."/>
            <person name="Kikuchi H."/>
            <person name="Masuho Y."/>
            <person name="Yamashita R."/>
            <person name="Nakai K."/>
            <person name="Yada T."/>
            <person name="Nakamura Y."/>
            <person name="Ohara O."/>
            <person name="Isogai T."/>
            <person name="Sugano S."/>
        </authorList>
    </citation>
    <scope>NUCLEOTIDE SEQUENCE [LARGE SCALE MRNA] (ISOFORMS 1 AND 2)</scope>
    <source>
        <tissue>Brain</tissue>
        <tissue>Teratocarcinoma</tissue>
        <tissue>Testis</tissue>
    </source>
</reference>
<reference key="2">
    <citation type="journal article" date="2003" name="Nature">
        <title>The DNA sequence of human chromosome 7.</title>
        <authorList>
            <person name="Hillier L.W."/>
            <person name="Fulton R.S."/>
            <person name="Fulton L.A."/>
            <person name="Graves T.A."/>
            <person name="Pepin K.H."/>
            <person name="Wagner-McPherson C."/>
            <person name="Layman D."/>
            <person name="Maas J."/>
            <person name="Jaeger S."/>
            <person name="Walker R."/>
            <person name="Wylie K."/>
            <person name="Sekhon M."/>
            <person name="Becker M.C."/>
            <person name="O'Laughlin M.D."/>
            <person name="Schaller M.E."/>
            <person name="Fewell G.A."/>
            <person name="Delehaunty K.D."/>
            <person name="Miner T.L."/>
            <person name="Nash W.E."/>
            <person name="Cordes M."/>
            <person name="Du H."/>
            <person name="Sun H."/>
            <person name="Edwards J."/>
            <person name="Bradshaw-Cordum H."/>
            <person name="Ali J."/>
            <person name="Andrews S."/>
            <person name="Isak A."/>
            <person name="Vanbrunt A."/>
            <person name="Nguyen C."/>
            <person name="Du F."/>
            <person name="Lamar B."/>
            <person name="Courtney L."/>
            <person name="Kalicki J."/>
            <person name="Ozersky P."/>
            <person name="Bielicki L."/>
            <person name="Scott K."/>
            <person name="Holmes A."/>
            <person name="Harkins R."/>
            <person name="Harris A."/>
            <person name="Strong C.M."/>
            <person name="Hou S."/>
            <person name="Tomlinson C."/>
            <person name="Dauphin-Kohlberg S."/>
            <person name="Kozlowicz-Reilly A."/>
            <person name="Leonard S."/>
            <person name="Rohlfing T."/>
            <person name="Rock S.M."/>
            <person name="Tin-Wollam A.-M."/>
            <person name="Abbott A."/>
            <person name="Minx P."/>
            <person name="Maupin R."/>
            <person name="Strowmatt C."/>
            <person name="Latreille P."/>
            <person name="Miller N."/>
            <person name="Johnson D."/>
            <person name="Murray J."/>
            <person name="Woessner J.P."/>
            <person name="Wendl M.C."/>
            <person name="Yang S.-P."/>
            <person name="Schultz B.R."/>
            <person name="Wallis J.W."/>
            <person name="Spieth J."/>
            <person name="Bieri T.A."/>
            <person name="Nelson J.O."/>
            <person name="Berkowicz N."/>
            <person name="Wohldmann P.E."/>
            <person name="Cook L.L."/>
            <person name="Hickenbotham M.T."/>
            <person name="Eldred J."/>
            <person name="Williams D."/>
            <person name="Bedell J.A."/>
            <person name="Mardis E.R."/>
            <person name="Clifton S.W."/>
            <person name="Chissoe S.L."/>
            <person name="Marra M.A."/>
            <person name="Raymond C."/>
            <person name="Haugen E."/>
            <person name="Gillett W."/>
            <person name="Zhou Y."/>
            <person name="James R."/>
            <person name="Phelps K."/>
            <person name="Iadanoto S."/>
            <person name="Bubb K."/>
            <person name="Simms E."/>
            <person name="Levy R."/>
            <person name="Clendenning J."/>
            <person name="Kaul R."/>
            <person name="Kent W.J."/>
            <person name="Furey T.S."/>
            <person name="Baertsch R.A."/>
            <person name="Brent M.R."/>
            <person name="Keibler E."/>
            <person name="Flicek P."/>
            <person name="Bork P."/>
            <person name="Suyama M."/>
            <person name="Bailey J.A."/>
            <person name="Portnoy M.E."/>
            <person name="Torrents D."/>
            <person name="Chinwalla A.T."/>
            <person name="Gish W.R."/>
            <person name="Eddy S.R."/>
            <person name="McPherson J.D."/>
            <person name="Olson M.V."/>
            <person name="Eichler E.E."/>
            <person name="Green E.D."/>
            <person name="Waterston R.H."/>
            <person name="Wilson R.K."/>
        </authorList>
    </citation>
    <scope>NUCLEOTIDE SEQUENCE [LARGE SCALE GENOMIC DNA]</scope>
</reference>
<reference key="3">
    <citation type="submission" date="2005-07" db="EMBL/GenBank/DDBJ databases">
        <authorList>
            <person name="Mural R.J."/>
            <person name="Istrail S."/>
            <person name="Sutton G.G."/>
            <person name="Florea L."/>
            <person name="Halpern A.L."/>
            <person name="Mobarry C.M."/>
            <person name="Lippert R."/>
            <person name="Walenz B."/>
            <person name="Shatkay H."/>
            <person name="Dew I."/>
            <person name="Miller J.R."/>
            <person name="Flanigan M.J."/>
            <person name="Edwards N.J."/>
            <person name="Bolanos R."/>
            <person name="Fasulo D."/>
            <person name="Halldorsson B.V."/>
            <person name="Hannenhalli S."/>
            <person name="Turner R."/>
            <person name="Yooseph S."/>
            <person name="Lu F."/>
            <person name="Nusskern D.R."/>
            <person name="Shue B.C."/>
            <person name="Zheng X.H."/>
            <person name="Zhong F."/>
            <person name="Delcher A.L."/>
            <person name="Huson D.H."/>
            <person name="Kravitz S.A."/>
            <person name="Mouchard L."/>
            <person name="Reinert K."/>
            <person name="Remington K.A."/>
            <person name="Clark A.G."/>
            <person name="Waterman M.S."/>
            <person name="Eichler E.E."/>
            <person name="Adams M.D."/>
            <person name="Hunkapiller M.W."/>
            <person name="Myers E.W."/>
            <person name="Venter J.C."/>
        </authorList>
    </citation>
    <scope>NUCLEOTIDE SEQUENCE [LARGE SCALE GENOMIC DNA]</scope>
</reference>
<reference key="4">
    <citation type="journal article" date="2004" name="Genome Res.">
        <title>The status, quality, and expansion of the NIH full-length cDNA project: the Mammalian Gene Collection (MGC).</title>
        <authorList>
            <consortium name="The MGC Project Team"/>
        </authorList>
    </citation>
    <scope>NUCLEOTIDE SEQUENCE [LARGE SCALE MRNA] (ISOFORM 1)</scope>
    <scope>VARIANTS GLY-330 AND ASP-525</scope>
    <source>
        <tissue>Testis</tissue>
    </source>
</reference>
<reference key="5">
    <citation type="journal article" date="2017" name="Nat. Struct. Mol. Biol.">
        <title>Site-specific mapping of the human SUMO proteome reveals co-modification with phosphorylation.</title>
        <authorList>
            <person name="Hendriks I.A."/>
            <person name="Lyon D."/>
            <person name="Young C."/>
            <person name="Jensen L.J."/>
            <person name="Vertegaal A.C."/>
            <person name="Nielsen M.L."/>
        </authorList>
    </citation>
    <scope>SUMOYLATION [LARGE SCALE ANALYSIS] AT LYS-264</scope>
    <scope>IDENTIFICATION BY MASS SPECTROMETRY [LARGE SCALE ANALYSIS]</scope>
</reference>
<gene>
    <name type="primary">ZNF680</name>
</gene>
<name>ZN680_HUMAN</name>
<feature type="chain" id="PRO_0000234000" description="Zinc finger protein 680">
    <location>
        <begin position="1"/>
        <end position="530"/>
    </location>
</feature>
<feature type="domain" description="KRAB" evidence="2">
    <location>
        <begin position="13"/>
        <end position="84"/>
    </location>
</feature>
<feature type="zinc finger region" description="C2H2-type 1" evidence="1">
    <location>
        <begin position="182"/>
        <end position="204"/>
    </location>
</feature>
<feature type="zinc finger region" description="C2H2-type 2" evidence="1">
    <location>
        <begin position="210"/>
        <end position="232"/>
    </location>
</feature>
<feature type="zinc finger region" description="C2H2-type 3" evidence="1">
    <location>
        <begin position="238"/>
        <end position="260"/>
    </location>
</feature>
<feature type="zinc finger region" description="C2H2-type 4" evidence="1">
    <location>
        <begin position="266"/>
        <end position="288"/>
    </location>
</feature>
<feature type="zinc finger region" description="C2H2-type 5" evidence="1">
    <location>
        <begin position="294"/>
        <end position="316"/>
    </location>
</feature>
<feature type="zinc finger region" description="C2H2-type 6" evidence="1">
    <location>
        <begin position="322"/>
        <end position="344"/>
    </location>
</feature>
<feature type="zinc finger region" description="C2H2-type 7" evidence="1">
    <location>
        <begin position="350"/>
        <end position="372"/>
    </location>
</feature>
<feature type="zinc finger region" description="C2H2-type 8" evidence="1">
    <location>
        <begin position="378"/>
        <end position="400"/>
    </location>
</feature>
<feature type="zinc finger region" description="C2H2-type 9" evidence="1">
    <location>
        <begin position="406"/>
        <end position="428"/>
    </location>
</feature>
<feature type="zinc finger region" description="C2H2-type 10" evidence="1">
    <location>
        <begin position="434"/>
        <end position="456"/>
    </location>
</feature>
<feature type="zinc finger region" description="C2H2-type 11" evidence="1">
    <location>
        <begin position="462"/>
        <end position="484"/>
    </location>
</feature>
<feature type="zinc finger region" description="C2H2-type 12" evidence="1">
    <location>
        <begin position="490"/>
        <end position="512"/>
    </location>
</feature>
<feature type="cross-link" description="Glycyl lysine isopeptide (Lys-Gly) (interchain with G-Cter in SUMO2)" evidence="6">
    <location>
        <position position="264"/>
    </location>
</feature>
<feature type="splice variant" id="VSP_043114" description="In isoform 2." evidence="4">
    <original>VIYSHFTEDLWPEHSIKDSFQKVILRGYGKCGHENLQLR</original>
    <variation>ESYCVAQADLELLVSSYLTALASLKMWDYRNNPLCQATM</variation>
    <location>
        <begin position="85"/>
        <end position="123"/>
    </location>
</feature>
<feature type="splice variant" id="VSP_043115" description="In isoform 2." evidence="4">
    <location>
        <begin position="124"/>
        <end position="530"/>
    </location>
</feature>
<feature type="sequence variant" id="VAR_027892" description="In dbSNP:rs11768951.">
    <original>S</original>
    <variation>F</variation>
    <location>
        <position position="132"/>
    </location>
</feature>
<feature type="sequence variant" id="VAR_027893" description="In dbSNP:rs17856885." evidence="3">
    <original>D</original>
    <variation>G</variation>
    <location>
        <position position="330"/>
    </location>
</feature>
<feature type="sequence variant" id="VAR_027894" description="In dbSNP:rs17852813." evidence="3">
    <original>N</original>
    <variation>D</variation>
    <location>
        <position position="525"/>
    </location>
</feature>
<accession>Q8NEM1</accession>
<accession>B3KVJ4</accession>
<accession>Q6ZNF3</accession>
<accession>Q8NC79</accession>